<gene>
    <name evidence="1" type="primary">sepF</name>
    <name type="ordered locus">LGAS_1200</name>
</gene>
<accession>Q042Q3</accession>
<keyword id="KW-0131">Cell cycle</keyword>
<keyword id="KW-0132">Cell division</keyword>
<keyword id="KW-0963">Cytoplasm</keyword>
<keyword id="KW-0717">Septation</keyword>
<protein>
    <recommendedName>
        <fullName evidence="1">Cell division protein SepF</fullName>
    </recommendedName>
</protein>
<sequence length="144" mass="16217">MAFDKLGRFFGIAEDDEMNEAPYTEAEQQEEEVPQAQKNERRANVVSINSGVGATSKIVLYEPRVYSDAKEVAQNLLNNKAVIINFARMDDEQARRIVDFITGTVYALNGEIQRVGDKIFLATPPKFETDGKIAELVEKKDKMD</sequence>
<reference key="1">
    <citation type="journal article" date="2006" name="Proc. Natl. Acad. Sci. U.S.A.">
        <title>Comparative genomics of the lactic acid bacteria.</title>
        <authorList>
            <person name="Makarova K.S."/>
            <person name="Slesarev A."/>
            <person name="Wolf Y.I."/>
            <person name="Sorokin A."/>
            <person name="Mirkin B."/>
            <person name="Koonin E.V."/>
            <person name="Pavlov A."/>
            <person name="Pavlova N."/>
            <person name="Karamychev V."/>
            <person name="Polouchine N."/>
            <person name="Shakhova V."/>
            <person name="Grigoriev I."/>
            <person name="Lou Y."/>
            <person name="Rohksar D."/>
            <person name="Lucas S."/>
            <person name="Huang K."/>
            <person name="Goodstein D.M."/>
            <person name="Hawkins T."/>
            <person name="Plengvidhya V."/>
            <person name="Welker D."/>
            <person name="Hughes J."/>
            <person name="Goh Y."/>
            <person name="Benson A."/>
            <person name="Baldwin K."/>
            <person name="Lee J.-H."/>
            <person name="Diaz-Muniz I."/>
            <person name="Dosti B."/>
            <person name="Smeianov V."/>
            <person name="Wechter W."/>
            <person name="Barabote R."/>
            <person name="Lorca G."/>
            <person name="Altermann E."/>
            <person name="Barrangou R."/>
            <person name="Ganesan B."/>
            <person name="Xie Y."/>
            <person name="Rawsthorne H."/>
            <person name="Tamir D."/>
            <person name="Parker C."/>
            <person name="Breidt F."/>
            <person name="Broadbent J.R."/>
            <person name="Hutkins R."/>
            <person name="O'Sullivan D."/>
            <person name="Steele J."/>
            <person name="Unlu G."/>
            <person name="Saier M.H. Jr."/>
            <person name="Klaenhammer T."/>
            <person name="Richardson P."/>
            <person name="Kozyavkin S."/>
            <person name="Weimer B.C."/>
            <person name="Mills D.A."/>
        </authorList>
    </citation>
    <scope>NUCLEOTIDE SEQUENCE [LARGE SCALE GENOMIC DNA]</scope>
    <source>
        <strain>ATCC 33323 / DSM 20243 / BCRC 14619 / CIP 102991 / JCM 1131 / KCTC 3163 / NCIMB 11718 / NCTC 13722 / AM63</strain>
    </source>
</reference>
<comment type="function">
    <text evidence="1">Cell division protein that is part of the divisome complex and is recruited early to the Z-ring. Probably stimulates Z-ring formation, perhaps through the cross-linking of FtsZ protofilaments. Its function overlaps with FtsA.</text>
</comment>
<comment type="subunit">
    <text evidence="1">Homodimer. Interacts with FtsZ.</text>
</comment>
<comment type="subcellular location">
    <subcellularLocation>
        <location evidence="1">Cytoplasm</location>
    </subcellularLocation>
    <text evidence="1">Localizes to the division site, in a FtsZ-dependent manner.</text>
</comment>
<comment type="similarity">
    <text evidence="1">Belongs to the SepF family.</text>
</comment>
<evidence type="ECO:0000255" key="1">
    <source>
        <dbReference type="HAMAP-Rule" id="MF_01197"/>
    </source>
</evidence>
<evidence type="ECO:0000256" key="2">
    <source>
        <dbReference type="SAM" id="MobiDB-lite"/>
    </source>
</evidence>
<dbReference type="EMBL" id="CP000413">
    <property type="protein sequence ID" value="ABJ60569.1"/>
    <property type="molecule type" value="Genomic_DNA"/>
</dbReference>
<dbReference type="RefSeq" id="WP_003647106.1">
    <property type="nucleotide sequence ID" value="NZ_WBMG01000002.1"/>
</dbReference>
<dbReference type="SMR" id="Q042Q3"/>
<dbReference type="GeneID" id="29639485"/>
<dbReference type="KEGG" id="lga:LGAS_1200"/>
<dbReference type="HOGENOM" id="CLU_078499_4_1_9"/>
<dbReference type="BioCyc" id="LGAS324831:G1G6Y-1196-MONOMER"/>
<dbReference type="Proteomes" id="UP000000664">
    <property type="component" value="Chromosome"/>
</dbReference>
<dbReference type="GO" id="GO:0005737">
    <property type="term" value="C:cytoplasm"/>
    <property type="evidence" value="ECO:0007669"/>
    <property type="project" value="UniProtKB-SubCell"/>
</dbReference>
<dbReference type="GO" id="GO:0000917">
    <property type="term" value="P:division septum assembly"/>
    <property type="evidence" value="ECO:0007669"/>
    <property type="project" value="UniProtKB-KW"/>
</dbReference>
<dbReference type="GO" id="GO:0043093">
    <property type="term" value="P:FtsZ-dependent cytokinesis"/>
    <property type="evidence" value="ECO:0007669"/>
    <property type="project" value="UniProtKB-UniRule"/>
</dbReference>
<dbReference type="Gene3D" id="3.30.110.150">
    <property type="entry name" value="SepF-like protein"/>
    <property type="match status" value="1"/>
</dbReference>
<dbReference type="HAMAP" id="MF_01197">
    <property type="entry name" value="SepF"/>
    <property type="match status" value="1"/>
</dbReference>
<dbReference type="InterPro" id="IPR023052">
    <property type="entry name" value="Cell_div_SepF"/>
</dbReference>
<dbReference type="InterPro" id="IPR007561">
    <property type="entry name" value="Cell_div_SepF/SepF-rel"/>
</dbReference>
<dbReference type="InterPro" id="IPR038594">
    <property type="entry name" value="SepF-like_sf"/>
</dbReference>
<dbReference type="PANTHER" id="PTHR35798">
    <property type="entry name" value="CELL DIVISION PROTEIN SEPF"/>
    <property type="match status" value="1"/>
</dbReference>
<dbReference type="PANTHER" id="PTHR35798:SF1">
    <property type="entry name" value="CELL DIVISION PROTEIN SEPF"/>
    <property type="match status" value="1"/>
</dbReference>
<dbReference type="Pfam" id="PF04472">
    <property type="entry name" value="SepF"/>
    <property type="match status" value="1"/>
</dbReference>
<name>SEPF_LACGA</name>
<proteinExistence type="inferred from homology"/>
<organism>
    <name type="scientific">Lactobacillus gasseri (strain ATCC 33323 / DSM 20243 / BCRC 14619 / CIP 102991 / JCM 1131 / KCTC 3163 / NCIMB 11718 / NCTC 13722 / AM63)</name>
    <dbReference type="NCBI Taxonomy" id="324831"/>
    <lineage>
        <taxon>Bacteria</taxon>
        <taxon>Bacillati</taxon>
        <taxon>Bacillota</taxon>
        <taxon>Bacilli</taxon>
        <taxon>Lactobacillales</taxon>
        <taxon>Lactobacillaceae</taxon>
        <taxon>Lactobacillus</taxon>
    </lineage>
</organism>
<feature type="chain" id="PRO_0000334020" description="Cell division protein SepF">
    <location>
        <begin position="1"/>
        <end position="144"/>
    </location>
</feature>
<feature type="region of interest" description="Disordered" evidence="2">
    <location>
        <begin position="16"/>
        <end position="42"/>
    </location>
</feature>